<dbReference type="EMBL" id="CP000127">
    <property type="protein sequence ID" value="ABA58783.1"/>
    <property type="molecule type" value="Genomic_DNA"/>
</dbReference>
<dbReference type="RefSeq" id="WP_002809314.1">
    <property type="nucleotide sequence ID" value="NC_007484.1"/>
</dbReference>
<dbReference type="SMR" id="Q3J8R3"/>
<dbReference type="FunCoup" id="Q3J8R3">
    <property type="interactions" value="657"/>
</dbReference>
<dbReference type="STRING" id="323261.Noc_2325"/>
<dbReference type="KEGG" id="noc:Noc_2325"/>
<dbReference type="eggNOG" id="COG0051">
    <property type="taxonomic scope" value="Bacteria"/>
</dbReference>
<dbReference type="HOGENOM" id="CLU_122625_1_3_6"/>
<dbReference type="InParanoid" id="Q3J8R3"/>
<dbReference type="Proteomes" id="UP000006838">
    <property type="component" value="Chromosome"/>
</dbReference>
<dbReference type="GO" id="GO:1990904">
    <property type="term" value="C:ribonucleoprotein complex"/>
    <property type="evidence" value="ECO:0007669"/>
    <property type="project" value="UniProtKB-KW"/>
</dbReference>
<dbReference type="GO" id="GO:0005840">
    <property type="term" value="C:ribosome"/>
    <property type="evidence" value="ECO:0007669"/>
    <property type="project" value="UniProtKB-KW"/>
</dbReference>
<dbReference type="GO" id="GO:0003735">
    <property type="term" value="F:structural constituent of ribosome"/>
    <property type="evidence" value="ECO:0007669"/>
    <property type="project" value="InterPro"/>
</dbReference>
<dbReference type="GO" id="GO:0000049">
    <property type="term" value="F:tRNA binding"/>
    <property type="evidence" value="ECO:0007669"/>
    <property type="project" value="UniProtKB-UniRule"/>
</dbReference>
<dbReference type="GO" id="GO:0006412">
    <property type="term" value="P:translation"/>
    <property type="evidence" value="ECO:0007669"/>
    <property type="project" value="UniProtKB-UniRule"/>
</dbReference>
<dbReference type="FunFam" id="3.30.70.600:FF:000001">
    <property type="entry name" value="30S ribosomal protein S10"/>
    <property type="match status" value="1"/>
</dbReference>
<dbReference type="Gene3D" id="3.30.70.600">
    <property type="entry name" value="Ribosomal protein S10 domain"/>
    <property type="match status" value="1"/>
</dbReference>
<dbReference type="HAMAP" id="MF_00508">
    <property type="entry name" value="Ribosomal_uS10"/>
    <property type="match status" value="1"/>
</dbReference>
<dbReference type="InterPro" id="IPR001848">
    <property type="entry name" value="Ribosomal_uS10"/>
</dbReference>
<dbReference type="InterPro" id="IPR018268">
    <property type="entry name" value="Ribosomal_uS10_CS"/>
</dbReference>
<dbReference type="InterPro" id="IPR027486">
    <property type="entry name" value="Ribosomal_uS10_dom"/>
</dbReference>
<dbReference type="InterPro" id="IPR036838">
    <property type="entry name" value="Ribosomal_uS10_dom_sf"/>
</dbReference>
<dbReference type="NCBIfam" id="NF001861">
    <property type="entry name" value="PRK00596.1"/>
    <property type="match status" value="1"/>
</dbReference>
<dbReference type="NCBIfam" id="TIGR01049">
    <property type="entry name" value="rpsJ_bact"/>
    <property type="match status" value="1"/>
</dbReference>
<dbReference type="PANTHER" id="PTHR11700">
    <property type="entry name" value="30S RIBOSOMAL PROTEIN S10 FAMILY MEMBER"/>
    <property type="match status" value="1"/>
</dbReference>
<dbReference type="Pfam" id="PF00338">
    <property type="entry name" value="Ribosomal_S10"/>
    <property type="match status" value="1"/>
</dbReference>
<dbReference type="PRINTS" id="PR00971">
    <property type="entry name" value="RIBOSOMALS10"/>
</dbReference>
<dbReference type="SMART" id="SM01403">
    <property type="entry name" value="Ribosomal_S10"/>
    <property type="match status" value="1"/>
</dbReference>
<dbReference type="SUPFAM" id="SSF54999">
    <property type="entry name" value="Ribosomal protein S10"/>
    <property type="match status" value="1"/>
</dbReference>
<dbReference type="PROSITE" id="PS00361">
    <property type="entry name" value="RIBOSOMAL_S10"/>
    <property type="match status" value="1"/>
</dbReference>
<sequence>MAKQQIIRIRLKAFDHRLIDQSAREIVDTAKRTGAHVRGPIPLPTRKERFTILISPHVNKDARDQYEIRTHKRLMDIVDPTEKTVDALMKLDLAAGVDVQIKLT</sequence>
<feature type="chain" id="PRO_0000237070" description="Small ribosomal subunit protein uS10">
    <location>
        <begin position="1"/>
        <end position="104"/>
    </location>
</feature>
<evidence type="ECO:0000255" key="1">
    <source>
        <dbReference type="HAMAP-Rule" id="MF_00508"/>
    </source>
</evidence>
<evidence type="ECO:0000305" key="2"/>
<organism>
    <name type="scientific">Nitrosococcus oceani (strain ATCC 19707 / BCRC 17464 / JCM 30415 / NCIMB 11848 / C-107)</name>
    <dbReference type="NCBI Taxonomy" id="323261"/>
    <lineage>
        <taxon>Bacteria</taxon>
        <taxon>Pseudomonadati</taxon>
        <taxon>Pseudomonadota</taxon>
        <taxon>Gammaproteobacteria</taxon>
        <taxon>Chromatiales</taxon>
        <taxon>Chromatiaceae</taxon>
        <taxon>Nitrosococcus</taxon>
    </lineage>
</organism>
<name>RS10_NITOC</name>
<protein>
    <recommendedName>
        <fullName evidence="1">Small ribosomal subunit protein uS10</fullName>
    </recommendedName>
    <alternativeName>
        <fullName evidence="2">30S ribosomal protein S10</fullName>
    </alternativeName>
</protein>
<reference key="1">
    <citation type="journal article" date="2006" name="Appl. Environ. Microbiol.">
        <title>Complete genome sequence of the marine, chemolithoautotrophic, ammonia-oxidizing bacterium Nitrosococcus oceani ATCC 19707.</title>
        <authorList>
            <person name="Klotz M.G."/>
            <person name="Arp D.J."/>
            <person name="Chain P.S.G."/>
            <person name="El-Sheikh A.F."/>
            <person name="Hauser L.J."/>
            <person name="Hommes N.G."/>
            <person name="Larimer F.W."/>
            <person name="Malfatti S.A."/>
            <person name="Norton J.M."/>
            <person name="Poret-Peterson A.T."/>
            <person name="Vergez L.M."/>
            <person name="Ward B.B."/>
        </authorList>
    </citation>
    <scope>NUCLEOTIDE SEQUENCE [LARGE SCALE GENOMIC DNA]</scope>
    <source>
        <strain>ATCC 19707 / BCRC 17464 / JCM 30415 / NCIMB 11848 / C-107</strain>
    </source>
</reference>
<gene>
    <name evidence="1" type="primary">rpsJ</name>
    <name type="ordered locus">Noc_2325</name>
</gene>
<proteinExistence type="inferred from homology"/>
<keyword id="KW-1185">Reference proteome</keyword>
<keyword id="KW-0687">Ribonucleoprotein</keyword>
<keyword id="KW-0689">Ribosomal protein</keyword>
<accession>Q3J8R3</accession>
<comment type="function">
    <text evidence="1">Involved in the binding of tRNA to the ribosomes.</text>
</comment>
<comment type="subunit">
    <text evidence="1">Part of the 30S ribosomal subunit.</text>
</comment>
<comment type="similarity">
    <text evidence="1">Belongs to the universal ribosomal protein uS10 family.</text>
</comment>